<organism>
    <name type="scientific">Mus musculus</name>
    <name type="common">Mouse</name>
    <dbReference type="NCBI Taxonomy" id="10090"/>
    <lineage>
        <taxon>Eukaryota</taxon>
        <taxon>Metazoa</taxon>
        <taxon>Chordata</taxon>
        <taxon>Craniata</taxon>
        <taxon>Vertebrata</taxon>
        <taxon>Euteleostomi</taxon>
        <taxon>Mammalia</taxon>
        <taxon>Eutheria</taxon>
        <taxon>Euarchontoglires</taxon>
        <taxon>Glires</taxon>
        <taxon>Rodentia</taxon>
        <taxon>Myomorpha</taxon>
        <taxon>Muroidea</taxon>
        <taxon>Muridae</taxon>
        <taxon>Murinae</taxon>
        <taxon>Mus</taxon>
        <taxon>Mus</taxon>
    </lineage>
</organism>
<protein>
    <recommendedName>
        <fullName evidence="5">Septin-1</fullName>
    </recommendedName>
    <alternativeName>
        <fullName>Differentiation protein 6</fullName>
        <shortName>Protein Diff6</shortName>
    </alternativeName>
    <alternativeName>
        <fullName>Peanut-like protein 3</fullName>
    </alternativeName>
</protein>
<reference key="1">
    <citation type="journal article" date="1990" name="Gene">
        <title>Lymphocyte HEV adhesion variants differ in the expression of multiple gene sequences.</title>
        <authorList>
            <person name="Nottenburg C."/>
            <person name="Gallatin W.M."/>
            <person name="St John T."/>
        </authorList>
    </citation>
    <scope>NUCLEOTIDE SEQUENCE [MRNA]</scope>
    <source>
        <strain>C57BL/6J</strain>
    </source>
</reference>
<reference key="2">
    <citation type="journal article" date="2004" name="Genome Res.">
        <title>The status, quality, and expansion of the NIH full-length cDNA project: the Mammalian Gene Collection (MGC).</title>
        <authorList>
            <consortium name="The MGC Project Team"/>
        </authorList>
    </citation>
    <scope>NUCLEOTIDE SEQUENCE [LARGE SCALE MRNA]</scope>
</reference>
<reference key="3">
    <citation type="journal article" date="2010" name="Cell">
        <title>A tissue-specific atlas of mouse protein phosphorylation and expression.</title>
        <authorList>
            <person name="Huttlin E.L."/>
            <person name="Jedrychowski M.P."/>
            <person name="Elias J.E."/>
            <person name="Goswami T."/>
            <person name="Rad R."/>
            <person name="Beausoleil S.A."/>
            <person name="Villen J."/>
            <person name="Haas W."/>
            <person name="Sowa M.E."/>
            <person name="Gygi S.P."/>
        </authorList>
    </citation>
    <scope>PHOSPHORYLATION [LARGE SCALE ANALYSIS] AT SER-206; SER-247 AND THR-250</scope>
    <scope>IDENTIFICATION BY MASS SPECTROMETRY [LARGE SCALE ANALYSIS]</scope>
    <source>
        <tissue>Lung</tissue>
        <tissue>Spleen</tissue>
    </source>
</reference>
<proteinExistence type="evidence at protein level"/>
<keyword id="KW-0131">Cell cycle</keyword>
<keyword id="KW-0132">Cell division</keyword>
<keyword id="KW-0963">Cytoplasm</keyword>
<keyword id="KW-0206">Cytoskeleton</keyword>
<keyword id="KW-0342">GTP-binding</keyword>
<keyword id="KW-0547">Nucleotide-binding</keyword>
<keyword id="KW-0597">Phosphoprotein</keyword>
<keyword id="KW-1185">Reference proteome</keyword>
<evidence type="ECO:0000250" key="1"/>
<evidence type="ECO:0000250" key="2">
    <source>
        <dbReference type="UniProtKB" id="Q8WYJ6"/>
    </source>
</evidence>
<evidence type="ECO:0000255" key="3">
    <source>
        <dbReference type="PROSITE-ProRule" id="PRU01056"/>
    </source>
</evidence>
<evidence type="ECO:0000256" key="4">
    <source>
        <dbReference type="SAM" id="MobiDB-lite"/>
    </source>
</evidence>
<evidence type="ECO:0000305" key="5"/>
<evidence type="ECO:0000312" key="6">
    <source>
        <dbReference type="MGI" id="MGI:1858916"/>
    </source>
</evidence>
<evidence type="ECO:0007744" key="7">
    <source>
    </source>
</evidence>
<name>SEPT1_MOUSE</name>
<accession>P42209</accession>
<accession>B2RU74</accession>
<sequence>MDKEYVGFAALPNQLHRKSVKKGFDFTLMVAGESGLGKSTLINSLFLTNLYEDRQVPDASARTAQTLTIERRGVEIEEGGIKVKLTLVDTPGFGDSVDCSDCWLPVVRFIEEQFEQYLRDESGLNRKNIQDSRVHCCLYFISPFGRGLRPLDVAFLRAVHEKVNIIPVIGKADALMPRETQALKQKIRDQLKEEEINIYQFPECDSDEDEEFKKQNEEMKENIPFAVVGSCEVVRDGTRPVRGRRYSWGTVEVENPHHCDFLNLRRMLVQTHLQDLKEVTHDLLYEGYRARCLQSLARPGARDRASRSKLSRQSATEIPLPMLPLADTEKLIREKDEELRRMQEMLEKMQAQMQQSQAQGEQSDVL</sequence>
<dbReference type="EMBL" id="M37030">
    <property type="protein sequence ID" value="AAA37803.1"/>
    <property type="status" value="ALT_FRAME"/>
    <property type="molecule type" value="mRNA"/>
</dbReference>
<dbReference type="EMBL" id="BC140998">
    <property type="protein sequence ID" value="AAI40999.1"/>
    <property type="molecule type" value="mRNA"/>
</dbReference>
<dbReference type="EMBL" id="BC145081">
    <property type="protein sequence ID" value="AAI45082.1"/>
    <property type="molecule type" value="mRNA"/>
</dbReference>
<dbReference type="CCDS" id="CCDS40141.1"/>
<dbReference type="PIR" id="JU0319">
    <property type="entry name" value="JU0319"/>
</dbReference>
<dbReference type="RefSeq" id="NP_059489.2">
    <property type="nucleotide sequence ID" value="NM_017461.3"/>
</dbReference>
<dbReference type="SMR" id="P42209"/>
<dbReference type="BioGRID" id="207602">
    <property type="interactions" value="1"/>
</dbReference>
<dbReference type="FunCoup" id="P42209">
    <property type="interactions" value="39"/>
</dbReference>
<dbReference type="IntAct" id="P42209">
    <property type="interactions" value="1"/>
</dbReference>
<dbReference type="STRING" id="10090.ENSMUSP00000101921"/>
<dbReference type="iPTMnet" id="P42209"/>
<dbReference type="PhosphoSitePlus" id="P42209"/>
<dbReference type="SwissPalm" id="P42209"/>
<dbReference type="REPRODUCTION-2DPAGE" id="P42209"/>
<dbReference type="jPOST" id="P42209"/>
<dbReference type="PaxDb" id="10090-ENSMUSP00000101921"/>
<dbReference type="PeptideAtlas" id="P42209"/>
<dbReference type="ProteomicsDB" id="255379"/>
<dbReference type="Antibodypedia" id="27233">
    <property type="antibodies" value="289 antibodies from 31 providers"/>
</dbReference>
<dbReference type="DNASU" id="54204"/>
<dbReference type="Ensembl" id="ENSMUST00000106314.8">
    <property type="protein sequence ID" value="ENSMUSP00000101921.2"/>
    <property type="gene ID" value="ENSMUSG00000000486.14"/>
</dbReference>
<dbReference type="GeneID" id="54204"/>
<dbReference type="KEGG" id="mmu:54204"/>
<dbReference type="UCSC" id="uc009juq.1">
    <property type="organism name" value="mouse"/>
</dbReference>
<dbReference type="AGR" id="MGI:1858916"/>
<dbReference type="CTD" id="1731"/>
<dbReference type="MGI" id="MGI:1858916">
    <property type="gene designation" value="Septin1"/>
</dbReference>
<dbReference type="VEuPathDB" id="HostDB:ENSMUSG00000000486"/>
<dbReference type="eggNOG" id="KOG2655">
    <property type="taxonomic scope" value="Eukaryota"/>
</dbReference>
<dbReference type="GeneTree" id="ENSGT00940000161794"/>
<dbReference type="HOGENOM" id="CLU_017718_0_0_1"/>
<dbReference type="InParanoid" id="P42209"/>
<dbReference type="OMA" id="EMKGSIP"/>
<dbReference type="OrthoDB" id="416553at2759"/>
<dbReference type="PhylomeDB" id="P42209"/>
<dbReference type="TreeFam" id="TF101079"/>
<dbReference type="BioGRID-ORCS" id="54204">
    <property type="hits" value="0 hits in 50 CRISPR screens"/>
</dbReference>
<dbReference type="CD-CODE" id="CE726F99">
    <property type="entry name" value="Postsynaptic density"/>
</dbReference>
<dbReference type="ChiTaRS" id="Sept1">
    <property type="organism name" value="mouse"/>
</dbReference>
<dbReference type="PRO" id="PR:P42209"/>
<dbReference type="Proteomes" id="UP000000589">
    <property type="component" value="Chromosome 7"/>
</dbReference>
<dbReference type="RNAct" id="P42209">
    <property type="molecule type" value="protein"/>
</dbReference>
<dbReference type="Bgee" id="ENSMUSG00000000486">
    <property type="expression patterns" value="Expressed in granulocyte and 109 other cell types or tissues"/>
</dbReference>
<dbReference type="ExpressionAtlas" id="P42209">
    <property type="expression patterns" value="baseline and differential"/>
</dbReference>
<dbReference type="GO" id="GO:0005813">
    <property type="term" value="C:centrosome"/>
    <property type="evidence" value="ECO:0007669"/>
    <property type="project" value="UniProtKB-SubCell"/>
</dbReference>
<dbReference type="GO" id="GO:0005737">
    <property type="term" value="C:cytoplasm"/>
    <property type="evidence" value="ECO:0007669"/>
    <property type="project" value="UniProtKB-SubCell"/>
</dbReference>
<dbReference type="GO" id="GO:0072687">
    <property type="term" value="C:meiotic spindle"/>
    <property type="evidence" value="ECO:0000314"/>
    <property type="project" value="MGI"/>
</dbReference>
<dbReference type="GO" id="GO:0030496">
    <property type="term" value="C:midbody"/>
    <property type="evidence" value="ECO:0000314"/>
    <property type="project" value="MGI"/>
</dbReference>
<dbReference type="GO" id="GO:0005525">
    <property type="term" value="F:GTP binding"/>
    <property type="evidence" value="ECO:0007669"/>
    <property type="project" value="UniProtKB-KW"/>
</dbReference>
<dbReference type="GO" id="GO:0042802">
    <property type="term" value="F:identical protein binding"/>
    <property type="evidence" value="ECO:0007669"/>
    <property type="project" value="Ensembl"/>
</dbReference>
<dbReference type="GO" id="GO:0051301">
    <property type="term" value="P:cell division"/>
    <property type="evidence" value="ECO:0007669"/>
    <property type="project" value="UniProtKB-KW"/>
</dbReference>
<dbReference type="GO" id="GO:0051311">
    <property type="term" value="P:meiotic metaphase chromosome alignment"/>
    <property type="evidence" value="ECO:0000315"/>
    <property type="project" value="MGI"/>
</dbReference>
<dbReference type="GO" id="GO:0007056">
    <property type="term" value="P:spindle assembly involved in female meiosis"/>
    <property type="evidence" value="ECO:0000315"/>
    <property type="project" value="MGI"/>
</dbReference>
<dbReference type="CDD" id="cd01850">
    <property type="entry name" value="CDC_Septin"/>
    <property type="match status" value="1"/>
</dbReference>
<dbReference type="FunFam" id="3.40.50.300:FF:001012">
    <property type="entry name" value="Septin 1"/>
    <property type="match status" value="1"/>
</dbReference>
<dbReference type="Gene3D" id="3.40.50.300">
    <property type="entry name" value="P-loop containing nucleotide triphosphate hydrolases"/>
    <property type="match status" value="1"/>
</dbReference>
<dbReference type="InterPro" id="IPR030379">
    <property type="entry name" value="G_SEPTIN_dom"/>
</dbReference>
<dbReference type="InterPro" id="IPR027417">
    <property type="entry name" value="P-loop_NTPase"/>
</dbReference>
<dbReference type="InterPro" id="IPR016491">
    <property type="entry name" value="Septin"/>
</dbReference>
<dbReference type="PANTHER" id="PTHR18884">
    <property type="entry name" value="SEPTIN"/>
    <property type="match status" value="1"/>
</dbReference>
<dbReference type="Pfam" id="PF00735">
    <property type="entry name" value="Septin"/>
    <property type="match status" value="1"/>
</dbReference>
<dbReference type="PIRSF" id="PIRSF006698">
    <property type="entry name" value="Septin"/>
    <property type="match status" value="1"/>
</dbReference>
<dbReference type="SUPFAM" id="SSF52540">
    <property type="entry name" value="P-loop containing nucleoside triphosphate hydrolases"/>
    <property type="match status" value="1"/>
</dbReference>
<dbReference type="PROSITE" id="PS51719">
    <property type="entry name" value="G_SEPTIN"/>
    <property type="match status" value="1"/>
</dbReference>
<comment type="function">
    <text evidence="1 5">Filament-forming cytoskeletal GTPase (By similarity). May play a role in cytokinesis (Potential).</text>
</comment>
<comment type="subunit">
    <text evidence="1">Septins polymerize into heterooligomeric protein complexes that form filaments, and can associate with cellular membranes, actin filaments and microtubules. GTPase activity is required for filament formation (By similarity). Interacts with AURKB (By similarity).</text>
</comment>
<comment type="subcellular location">
    <subcellularLocation>
        <location evidence="1">Cytoplasm</location>
    </subcellularLocation>
    <subcellularLocation>
        <location evidence="1">Cytoplasm</location>
        <location evidence="1">Cytoskeleton</location>
    </subcellularLocation>
    <subcellularLocation>
        <location evidence="1">Cytoplasm</location>
        <location evidence="1">Cytoskeleton</location>
        <location evidence="1">Microtubule organizing center</location>
        <location evidence="1">Centrosome</location>
    </subcellularLocation>
    <subcellularLocation>
        <location evidence="1">Midbody</location>
    </subcellularLocation>
    <text evidence="1">Remains at the centrosomes and the nearby microtubules throughout mitosis. Localizes to the midbody during cytokinesis (By similarity).</text>
</comment>
<comment type="similarity">
    <text evidence="3">Belongs to the TRAFAC class TrmE-Era-EngA-EngB-Septin-like GTPase superfamily. Septin GTPase family.</text>
</comment>
<comment type="sequence caution" evidence="5">
    <conflict type="frameshift">
        <sequence resource="EMBL-CDS" id="AAA37803"/>
    </conflict>
</comment>
<gene>
    <name evidence="6" type="primary">Septin1</name>
    <name evidence="6" type="synonym">Diff6</name>
    <name evidence="6" type="synonym">Pnutl3</name>
    <name evidence="6" type="synonym">Sept1</name>
</gene>
<feature type="chain" id="PRO_0000173514" description="Septin-1">
    <location>
        <begin position="1"/>
        <end position="366"/>
    </location>
</feature>
<feature type="domain" description="Septin-type G" evidence="3">
    <location>
        <begin position="22"/>
        <end position="295"/>
    </location>
</feature>
<feature type="region of interest" description="G1 motif" evidence="3">
    <location>
        <begin position="32"/>
        <end position="39"/>
    </location>
</feature>
<feature type="region of interest" description="G3 motif" evidence="3">
    <location>
        <begin position="89"/>
        <end position="92"/>
    </location>
</feature>
<feature type="region of interest" description="G4 motif" evidence="3">
    <location>
        <begin position="170"/>
        <end position="173"/>
    </location>
</feature>
<feature type="region of interest" description="Disordered" evidence="4">
    <location>
        <begin position="347"/>
        <end position="366"/>
    </location>
</feature>
<feature type="compositionally biased region" description="Low complexity" evidence="4">
    <location>
        <begin position="349"/>
        <end position="366"/>
    </location>
</feature>
<feature type="binding site" evidence="1">
    <location>
        <begin position="32"/>
        <end position="39"/>
    </location>
    <ligand>
        <name>GTP</name>
        <dbReference type="ChEBI" id="CHEBI:37565"/>
    </ligand>
</feature>
<feature type="binding site" evidence="1">
    <location>
        <position position="66"/>
    </location>
    <ligand>
        <name>GTP</name>
        <dbReference type="ChEBI" id="CHEBI:37565"/>
    </ligand>
</feature>
<feature type="binding site" evidence="1">
    <location>
        <position position="92"/>
    </location>
    <ligand>
        <name>GTP</name>
        <dbReference type="ChEBI" id="CHEBI:37565"/>
    </ligand>
</feature>
<feature type="binding site" evidence="1">
    <location>
        <begin position="171"/>
        <end position="179"/>
    </location>
    <ligand>
        <name>GTP</name>
        <dbReference type="ChEBI" id="CHEBI:37565"/>
    </ligand>
</feature>
<feature type="binding site" evidence="1">
    <location>
        <position position="229"/>
    </location>
    <ligand>
        <name>GTP</name>
        <dbReference type="ChEBI" id="CHEBI:37565"/>
    </ligand>
</feature>
<feature type="binding site" evidence="1">
    <location>
        <position position="244"/>
    </location>
    <ligand>
        <name>GTP</name>
        <dbReference type="ChEBI" id="CHEBI:37565"/>
    </ligand>
</feature>
<feature type="modified residue" description="Phosphoserine" evidence="7">
    <location>
        <position position="206"/>
    </location>
</feature>
<feature type="modified residue" description="Phosphoserine" evidence="7">
    <location>
        <position position="247"/>
    </location>
</feature>
<feature type="modified residue" description="Phosphothreonine" evidence="7">
    <location>
        <position position="250"/>
    </location>
</feature>
<feature type="modified residue" description="Phosphoserine; by AURKB" evidence="2">
    <location>
        <position position="306"/>
    </location>
</feature>
<feature type="modified residue" description="Phosphoserine; by AURKB" evidence="2">
    <location>
        <position position="314"/>
    </location>
</feature>
<feature type="sequence conflict" description="In Ref. 1; AAA37803." evidence="5" ref="1">
    <original>C</original>
    <variation>F</variation>
    <location>
        <position position="99"/>
    </location>
</feature>